<reference key="1">
    <citation type="journal article" date="1999" name="Am. J. Physiol.">
        <title>A novel p64-related Cl- channel: subcellular distribution and nephron segment-specific expression.</title>
        <authorList>
            <person name="Edwards J.C."/>
        </authorList>
    </citation>
    <scope>NUCLEOTIDE SEQUENCE [MRNA]</scope>
</reference>
<reference key="2">
    <citation type="journal article" date="1999" name="J. Neurosci.">
        <title>A 29 kDa intracellular chloride channel p64H1 is associated with large dense-core vesicles in rat hippocampal neurons.</title>
        <authorList>
            <person name="Chuang J.Z."/>
            <person name="Milner T.A."/>
            <person name="Zhu M."/>
            <person name="Sung C.H."/>
        </authorList>
    </citation>
    <scope>NUCLEOTIDE SEQUENCE [MRNA]</scope>
</reference>
<reference key="3">
    <citation type="journal article" date="2001" name="Genome Res.">
        <title>Towards a catalog of human genes and proteins: sequencing and analysis of 500 novel complete protein coding human cDNAs.</title>
        <authorList>
            <person name="Wiemann S."/>
            <person name="Weil B."/>
            <person name="Wellenreuther R."/>
            <person name="Gassenhuber J."/>
            <person name="Glassl S."/>
            <person name="Ansorge W."/>
            <person name="Boecher M."/>
            <person name="Bloecker H."/>
            <person name="Bauersachs S."/>
            <person name="Blum H."/>
            <person name="Lauber J."/>
            <person name="Duesterhoeft A."/>
            <person name="Beyer A."/>
            <person name="Koehrer K."/>
            <person name="Strack N."/>
            <person name="Mewes H.-W."/>
            <person name="Ottenwaelder B."/>
            <person name="Obermaier B."/>
            <person name="Tampe J."/>
            <person name="Heubner D."/>
            <person name="Wambutt R."/>
            <person name="Korn B."/>
            <person name="Klein M."/>
            <person name="Poustka A."/>
        </authorList>
    </citation>
    <scope>NUCLEOTIDE SEQUENCE [LARGE SCALE MRNA]</scope>
    <source>
        <tissue>Kidney</tissue>
    </source>
</reference>
<reference key="4">
    <citation type="journal article" date="2004" name="Genome Res.">
        <title>The status, quality, and expansion of the NIH full-length cDNA project: the Mammalian Gene Collection (MGC).</title>
        <authorList>
            <consortium name="The MGC Project Team"/>
        </authorList>
    </citation>
    <scope>NUCLEOTIDE SEQUENCE [LARGE SCALE MRNA]</scope>
    <source>
        <tissue>Ovary</tissue>
    </source>
</reference>
<reference key="5">
    <citation type="submission" date="2006-02" db="UniProtKB">
        <authorList>
            <person name="Bienvenut W.V."/>
            <person name="Claeys D."/>
        </authorList>
    </citation>
    <scope>PROTEIN SEQUENCE OF 2-24; 41-60; 62-85 AND 125-130</scope>
    <scope>CLEAVAGE OF INITIATOR METHIONINE</scope>
    <scope>ACETYLATION AT ALA-2</scope>
    <scope>IDENTIFICATION BY MASS SPECTROMETRY</scope>
    <source>
        <tissue>Platelet</tissue>
    </source>
</reference>
<reference key="6">
    <citation type="journal article" date="2000" name="Mol. Biol. Cell">
        <title>Identification of a novel member of the chloride intracellular channel gene family (CLIC5) that associates with the actin cytoskeleton of placental microvilli.</title>
        <authorList>
            <person name="Berryman M."/>
            <person name="Bretscher A."/>
        </authorList>
    </citation>
    <scope>SUBUNIT</scope>
    <scope>TISSUE SPECIFICITY</scope>
</reference>
<reference key="7">
    <citation type="journal article" date="2002" name="Am. J. Pathol.">
        <title>Differential expression of a chloride intracellular channel gene, CLIC4, in transforming growth factor-beta1-mediated conversion of fibroblasts to myofibroblasts.</title>
        <authorList>
            <person name="Ronnov-Jessen L."/>
            <person name="Villadsen R."/>
            <person name="Edwards J.C."/>
            <person name="Petersen O.W."/>
        </authorList>
    </citation>
    <scope>INDUCTION</scope>
    <scope>FUNCTION</scope>
</reference>
<reference key="8">
    <citation type="journal article" date="2002" name="J. Biol. Chem.">
        <title>AKAP350 at the Golgi apparatus. II. Association of AKAP350 with a novel chloride intracellular channel (CLIC) family member.</title>
        <authorList>
            <person name="Shanks R.A."/>
            <person name="Larocca M.C."/>
            <person name="Berryman M."/>
            <person name="Edwards J.C."/>
            <person name="Urushidani T."/>
            <person name="Navarre J."/>
            <person name="Goldenring J.R."/>
        </authorList>
    </citation>
    <scope>INTERACTION WITH AKAP9</scope>
</reference>
<reference key="9">
    <citation type="journal article" date="2003" name="Cell Motil. Cytoskeleton">
        <title>CLIC4 is enriched at cell-cell junctions and colocalizes with AKAP350 at the centrosome and midbody of cultured mammalian cells.</title>
        <authorList>
            <person name="Berryman M.A."/>
            <person name="Goldenring J.R."/>
        </authorList>
    </citation>
    <scope>FUNCTION</scope>
    <scope>SUBCELLULAR LOCATION</scope>
</reference>
<reference key="10">
    <citation type="journal article" date="2005" name="J. Biol. Chem.">
        <title>Proteomic analysis of vascular endothelial growth factor-induced endothelial cell differentiation reveals a role for chloride intracellular channel 4 (CLIC4) in tubular morphogenesis.</title>
        <authorList>
            <person name="Bohman S."/>
            <person name="Matsumoto T."/>
            <person name="Suh K."/>
            <person name="Dimberg A."/>
            <person name="Jakobsson L."/>
            <person name="Yuspa S."/>
            <person name="Claesson-Welsh L."/>
        </authorList>
    </citation>
    <scope>FUNCTION</scope>
</reference>
<reference key="11">
    <citation type="journal article" date="2007" name="Clin. Cancer Res.">
        <title>Reciprocal modifications of CLIC4 in tumor epithelium and stroma mark malignant progression of multiple human cancers.</title>
        <authorList>
            <person name="Suh K.S."/>
            <person name="Crutchley J.M."/>
            <person name="Koochek A."/>
            <person name="Ryscavage A."/>
            <person name="Bhat K."/>
            <person name="Tanaka T."/>
            <person name="Oshima A."/>
            <person name="Fitzgerald P."/>
            <person name="Yuspa S.H."/>
        </authorList>
    </citation>
    <scope>SUBCELLULAR LOCATION</scope>
    <scope>TISSUE SPECIFICITY</scope>
</reference>
<reference key="12">
    <citation type="journal article" date="2007" name="J. Cell Sci.">
        <title>CLIC4 mediates and is required for Ca2+-induced keratinocyte differentiation.</title>
        <authorList>
            <person name="Suh K.S."/>
            <person name="Mutoh M."/>
            <person name="Mutoh T."/>
            <person name="Li L."/>
            <person name="Ryscavage A."/>
            <person name="Crutchley J.M."/>
            <person name="Dumont R.A."/>
            <person name="Cheng C."/>
            <person name="Yuspa S.H."/>
        </authorList>
    </citation>
    <scope>TISSUE SPECIFICITY</scope>
    <scope>INDUCTION</scope>
    <scope>SUBCELLULAR LOCATION</scope>
</reference>
<reference key="13">
    <citation type="journal article" date="2008" name="Biochem. Biophys. Res. Commun.">
        <title>CLIC4 interacts with histamine H3 receptor and enhances the receptor cell surface expression.</title>
        <authorList>
            <person name="Maeda K."/>
            <person name="Haraguchi M."/>
            <person name="Kuramasu A."/>
            <person name="Sato T."/>
            <person name="Ariake K."/>
            <person name="Sakagami H."/>
            <person name="Kondo H."/>
            <person name="Yanai K."/>
            <person name="Fukunaga K."/>
            <person name="Yanagisawa T."/>
            <person name="Sukegawa J."/>
        </authorList>
    </citation>
    <scope>INTERACTION WITH HRH3</scope>
    <scope>FUNCTION</scope>
    <scope>SUBCELLULAR LOCATION</scope>
</reference>
<reference key="14">
    <citation type="journal article" date="2009" name="Anal. Chem.">
        <title>Lys-N and trypsin cover complementary parts of the phosphoproteome in a refined SCX-based approach.</title>
        <authorList>
            <person name="Gauci S."/>
            <person name="Helbig A.O."/>
            <person name="Slijper M."/>
            <person name="Krijgsveld J."/>
            <person name="Heck A.J."/>
            <person name="Mohammed S."/>
        </authorList>
    </citation>
    <scope>ACETYLATION [LARGE SCALE ANALYSIS] AT ALA-2</scope>
    <scope>CLEAVAGE OF INITIATOR METHIONINE [LARGE SCALE ANALYSIS]</scope>
    <scope>IDENTIFICATION BY MASS SPECTROMETRY [LARGE SCALE ANALYSIS]</scope>
</reference>
<reference key="15">
    <citation type="journal article" date="2009" name="Angiogenesis">
        <title>Chloride intracellular channel 4 is involved in endothelial proliferation and morphogenesis in vitro.</title>
        <authorList>
            <person name="Tung J.J."/>
            <person name="Hobert O."/>
            <person name="Berryman M."/>
            <person name="Kitajewski J."/>
        </authorList>
    </citation>
    <scope>FUNCTION</scope>
</reference>
<reference key="16">
    <citation type="journal article" date="2009" name="Science">
        <title>Lysine acetylation targets protein complexes and co-regulates major cellular functions.</title>
        <authorList>
            <person name="Choudhary C."/>
            <person name="Kumar C."/>
            <person name="Gnad F."/>
            <person name="Nielsen M.L."/>
            <person name="Rehman M."/>
            <person name="Walther T.C."/>
            <person name="Olsen J.V."/>
            <person name="Mann M."/>
        </authorList>
    </citation>
    <scope>ACETYLATION [LARGE SCALE ANALYSIS] AT LYS-130</scope>
    <scope>IDENTIFICATION BY MASS SPECTROMETRY [LARGE SCALE ANALYSIS]</scope>
</reference>
<reference key="17">
    <citation type="journal article" date="2011" name="BMC Syst. Biol.">
        <title>Initial characterization of the human central proteome.</title>
        <authorList>
            <person name="Burkard T.R."/>
            <person name="Planyavsky M."/>
            <person name="Kaupe I."/>
            <person name="Breitwieser F.P."/>
            <person name="Buerckstuemmer T."/>
            <person name="Bennett K.L."/>
            <person name="Superti-Furga G."/>
            <person name="Colinge J."/>
        </authorList>
    </citation>
    <scope>IDENTIFICATION BY MASS SPECTROMETRY [LARGE SCALE ANALYSIS]</scope>
</reference>
<reference key="18">
    <citation type="journal article" date="2011" name="Sci. Signal.">
        <title>System-wide temporal characterization of the proteome and phosphoproteome of human embryonic stem cell differentiation.</title>
        <authorList>
            <person name="Rigbolt K.T."/>
            <person name="Prokhorova T.A."/>
            <person name="Akimov V."/>
            <person name="Henningsen J."/>
            <person name="Johansen P.T."/>
            <person name="Kratchmarova I."/>
            <person name="Kassem M."/>
            <person name="Mann M."/>
            <person name="Olsen J.V."/>
            <person name="Blagoev B."/>
        </authorList>
    </citation>
    <scope>ACETYLATION [LARGE SCALE ANALYSIS] AT ALA-2</scope>
    <scope>PHOSPHORYLATION [LARGE SCALE ANALYSIS] AT SER-4</scope>
    <scope>CLEAVAGE OF INITIATOR METHIONINE [LARGE SCALE ANALYSIS]</scope>
    <scope>IDENTIFICATION BY MASS SPECTROMETRY [LARGE SCALE ANALYSIS]</scope>
</reference>
<reference key="19">
    <citation type="journal article" date="2012" name="Mol. Cell. Proteomics">
        <title>Comparative large-scale characterisation of plant vs. mammal proteins reveals similar and idiosyncratic N-alpha acetylation features.</title>
        <authorList>
            <person name="Bienvenut W.V."/>
            <person name="Sumpton D."/>
            <person name="Martinez A."/>
            <person name="Lilla S."/>
            <person name="Espagne C."/>
            <person name="Meinnel T."/>
            <person name="Giglione C."/>
        </authorList>
    </citation>
    <scope>ACETYLATION [LARGE SCALE ANALYSIS] AT ALA-2</scope>
    <scope>CLEAVAGE OF INITIATOR METHIONINE [LARGE SCALE ANALYSIS]</scope>
    <scope>IDENTIFICATION BY MASS SPECTROMETRY [LARGE SCALE ANALYSIS]</scope>
</reference>
<reference key="20">
    <citation type="journal article" date="2014" name="J. Proteomics">
        <title>An enzyme assisted RP-RPLC approach for in-depth analysis of human liver phosphoproteome.</title>
        <authorList>
            <person name="Bian Y."/>
            <person name="Song C."/>
            <person name="Cheng K."/>
            <person name="Dong M."/>
            <person name="Wang F."/>
            <person name="Huang J."/>
            <person name="Sun D."/>
            <person name="Wang L."/>
            <person name="Ye M."/>
            <person name="Zou H."/>
        </authorList>
    </citation>
    <scope>IDENTIFICATION BY MASS SPECTROMETRY [LARGE SCALE ANALYSIS]</scope>
    <source>
        <tissue>Liver</tissue>
    </source>
</reference>
<reference key="21">
    <citation type="journal article" date="2015" name="PLoS ONE">
        <title>Members of the chloride intracellular ion channel protein family demonstrate glutaredoxin-like enzymatic activity.</title>
        <authorList>
            <person name="Al Khamici H."/>
            <person name="Brown L.J."/>
            <person name="Hossain K.R."/>
            <person name="Hudson A.L."/>
            <person name="Sinclair-Burton A.A."/>
            <person name="Ng J.P."/>
            <person name="Daniel E.L."/>
            <person name="Hare J.E."/>
            <person name="Cornell B.A."/>
            <person name="Curmi P.M."/>
            <person name="Davey M.W."/>
            <person name="Valenzuela S.M."/>
        </authorList>
    </citation>
    <scope>FUNCTION</scope>
</reference>
<reference key="22">
    <citation type="journal article" date="2015" name="Proteomics">
        <title>N-terminome analysis of the human mitochondrial proteome.</title>
        <authorList>
            <person name="Vaca Jacome A.S."/>
            <person name="Rabilloud T."/>
            <person name="Schaeffer-Reiss C."/>
            <person name="Rompais M."/>
            <person name="Ayoub D."/>
            <person name="Lane L."/>
            <person name="Bairoch A."/>
            <person name="Van Dorsselaer A."/>
            <person name="Carapito C."/>
        </authorList>
    </citation>
    <scope>IDENTIFICATION BY MASS SPECTROMETRY [LARGE SCALE ANALYSIS]</scope>
</reference>
<reference key="23">
    <citation type="journal article" date="2023" name="Biomolecules">
        <title>In Vitro Enzymatic Studies Reveal pH and Temperature Sensitive Properties of the CLIC Proteins.</title>
        <authorList>
            <person name="Alghalayini A."/>
            <person name="Hossain K.R."/>
            <person name="Moghaddasi S."/>
            <person name="Turkewitz D.R."/>
            <person name="D'Amario C."/>
            <person name="Wallach M."/>
            <person name="Valenzuela S.M."/>
        </authorList>
    </citation>
    <scope>FUNCTION</scope>
    <scope>BIOPHYSICOCHEMICAL PROPERTIES</scope>
    <scope>ACTIVITY REGULATION</scope>
</reference>
<reference key="24">
    <citation type="journal article" date="2005" name="FEBS J.">
        <title>Crystal structure of the soluble form of the redox-regulated chloride ion channel protein CLIC4.</title>
        <authorList>
            <person name="Littler D.R."/>
            <person name="Assaad N.N."/>
            <person name="Harrop S.J."/>
            <person name="Brown L.J."/>
            <person name="Pankhurst G.J."/>
            <person name="Luciani P."/>
            <person name="Aguilar M.-I."/>
            <person name="Mazzanti M."/>
            <person name="Berryman M.A."/>
            <person name="Breit S.N."/>
            <person name="Curmi P.M.G."/>
        </authorList>
    </citation>
    <scope>X-RAY CRYSTALLOGRAPHY (1.8 ANGSTROMS)</scope>
    <scope>SUBUNIT</scope>
    <scope>FUNCTION</scope>
    <scope>TRANSPORTER ACTIVITY</scope>
    <scope>SUBCELLULAR LOCATION</scope>
</reference>
<reference key="25">
    <citation type="journal article" date="2006" name="Biochem. Biophys. Res. Commun.">
        <title>Trimeric structure of the wild soluble chloride intracellular ion channel CLIC4 observed in crystals.</title>
        <authorList>
            <person name="Li Y."/>
            <person name="Li D."/>
            <person name="Zeng Z."/>
            <person name="Wang D."/>
        </authorList>
    </citation>
    <scope>X-RAY CRYSTALLOGRAPHY (2.2 ANGSTROMS)</scope>
    <scope>DOMAIN</scope>
</reference>
<sequence length="253" mass="28772">MALSMPLNGLKEEDKEPLIELFVKAGSDGESIGNCPFSQRLFMILWLKGVVFSVTTVDLKRKPADLQNLAPGTHPPFITFNSEVKTDVNKIEEFLEEVLCPPKYLKLSPKHPESNTAGMDIFAKFSAYIKNSRPEANEALERGLLKTLQKLDEYLNSPLPDEIDENSMEDIKFSTRKFLDGNEMTLADCNLLPKLHIVKVVAKKYRNFDIPKEMTGIWRYLTNAYSRDEFTNTCPSDKEVEIAYSDVAKRLTK</sequence>
<name>CLIC4_HUMAN</name>
<protein>
    <recommendedName>
        <fullName>Chloride intracellular channel protein 4</fullName>
    </recommendedName>
    <alternativeName>
        <fullName evidence="23 24">Glutaredoxin-like oxidoreductase CLIC4</fullName>
        <ecNumber evidence="17 18">1.8.-.-</ecNumber>
    </alternativeName>
    <alternativeName>
        <fullName>Intracellular chloride ion channel protein p64H1</fullName>
    </alternativeName>
</protein>
<evidence type="ECO:0000250" key="1">
    <source>
        <dbReference type="UniProtKB" id="O00299"/>
    </source>
</evidence>
<evidence type="ECO:0000250" key="2">
    <source>
        <dbReference type="UniProtKB" id="Q9QYB1"/>
    </source>
</evidence>
<evidence type="ECO:0000250" key="3">
    <source>
        <dbReference type="UniProtKB" id="Q9Z0W7"/>
    </source>
</evidence>
<evidence type="ECO:0000250" key="4">
    <source>
        <dbReference type="UniProtKB" id="Q9Z1Q5"/>
    </source>
</evidence>
<evidence type="ECO:0000255" key="5">
    <source>
        <dbReference type="PROSITE-ProRule" id="PRU00685"/>
    </source>
</evidence>
<evidence type="ECO:0000269" key="6">
    <source>
    </source>
</evidence>
<evidence type="ECO:0000269" key="7">
    <source>
    </source>
</evidence>
<evidence type="ECO:0000269" key="8">
    <source>
    </source>
</evidence>
<evidence type="ECO:0000269" key="9">
    <source>
    </source>
</evidence>
<evidence type="ECO:0000269" key="10">
    <source>
    </source>
</evidence>
<evidence type="ECO:0000269" key="11">
    <source>
    </source>
</evidence>
<evidence type="ECO:0000269" key="12">
    <source>
    </source>
</evidence>
<evidence type="ECO:0000269" key="13">
    <source>
    </source>
</evidence>
<evidence type="ECO:0000269" key="14">
    <source>
    </source>
</evidence>
<evidence type="ECO:0000269" key="15">
    <source>
    </source>
</evidence>
<evidence type="ECO:0000269" key="16">
    <source>
    </source>
</evidence>
<evidence type="ECO:0000269" key="17">
    <source>
    </source>
</evidence>
<evidence type="ECO:0000269" key="18">
    <source>
    </source>
</evidence>
<evidence type="ECO:0000269" key="19">
    <source ref="5"/>
</evidence>
<evidence type="ECO:0000303" key="20">
    <source>
    </source>
</evidence>
<evidence type="ECO:0000305" key="21"/>
<evidence type="ECO:0000305" key="22">
    <source>
    </source>
</evidence>
<evidence type="ECO:0000305" key="23">
    <source>
    </source>
</evidence>
<evidence type="ECO:0000305" key="24">
    <source>
    </source>
</evidence>
<evidence type="ECO:0000312" key="25">
    <source>
        <dbReference type="HGNC" id="HGNC:13518"/>
    </source>
</evidence>
<evidence type="ECO:0007744" key="26">
    <source>
    </source>
</evidence>
<evidence type="ECO:0007744" key="27">
    <source>
    </source>
</evidence>
<evidence type="ECO:0007744" key="28">
    <source>
    </source>
</evidence>
<evidence type="ECO:0007744" key="29">
    <source>
    </source>
</evidence>
<evidence type="ECO:0007829" key="30">
    <source>
        <dbReference type="PDB" id="2AHE"/>
    </source>
</evidence>
<feature type="initiator methionine" description="Removed" evidence="19 26 28 29">
    <location>
        <position position="1"/>
    </location>
</feature>
<feature type="chain" id="PRO_0000144210" description="Chloride intracellular channel protein 4">
    <location>
        <begin position="2"/>
        <end position="253"/>
    </location>
</feature>
<feature type="transmembrane region" description="Helical; Note=After insertion into the membrane" evidence="3">
    <location>
        <begin position="37"/>
        <end position="57"/>
    </location>
</feature>
<feature type="domain" description="GST C-terminal" evidence="5">
    <location>
        <begin position="81"/>
        <end position="244"/>
    </location>
</feature>
<feature type="region of interest" description="Required for insertion into the membrane" evidence="21">
    <location>
        <begin position="2"/>
        <end position="101"/>
    </location>
</feature>
<feature type="short sequence motif" description="G-site" evidence="3">
    <location>
        <begin position="35"/>
        <end position="38"/>
    </location>
</feature>
<feature type="modified residue" description="N-acetylalanine" evidence="19 26 28 29">
    <location>
        <position position="2"/>
    </location>
</feature>
<feature type="modified residue" description="Phosphoserine" evidence="28">
    <location>
        <position position="4"/>
    </location>
</feature>
<feature type="modified residue" description="N6-acetyllysine" evidence="1">
    <location>
        <position position="24"/>
    </location>
</feature>
<feature type="modified residue" description="N6-acetyllysine" evidence="27">
    <location>
        <position position="130"/>
    </location>
</feature>
<feature type="modified residue" description="Phosphoserine" evidence="1">
    <location>
        <position position="132"/>
    </location>
</feature>
<feature type="modified residue" description="Phosphoserine" evidence="1">
    <location>
        <position position="167"/>
    </location>
</feature>
<feature type="modified residue" description="Phosphoserine" evidence="2">
    <location>
        <position position="236"/>
    </location>
</feature>
<feature type="modified residue" description="Phosphotyrosine" evidence="4">
    <location>
        <position position="244"/>
    </location>
</feature>
<feature type="sequence conflict" description="In Ref. 2; AAD26136." evidence="21" ref="2">
    <original>D</original>
    <variation>Y</variation>
    <location>
        <position position="14"/>
    </location>
</feature>
<feature type="sequence conflict" description="In Ref. 1; AAD38446 and 2; AAD26136." evidence="21" ref="1 2">
    <original>RP</original>
    <variation>SA</variation>
    <location>
        <begin position="133"/>
        <end position="134"/>
    </location>
</feature>
<feature type="sequence conflict" description="In Ref. 2; AAD26136." evidence="21" ref="2">
    <original>Y</original>
    <variation>S</variation>
    <location>
        <position position="225"/>
    </location>
</feature>
<feature type="sequence conflict" description="In Ref. 2; AAD26136." evidence="21" ref="2">
    <original>T</original>
    <variation>A</variation>
    <location>
        <position position="233"/>
    </location>
</feature>
<feature type="strand" evidence="30">
    <location>
        <begin position="19"/>
        <end position="25"/>
    </location>
</feature>
<feature type="strand" evidence="30">
    <location>
        <begin position="29"/>
        <end position="32"/>
    </location>
</feature>
<feature type="helix" evidence="30">
    <location>
        <begin position="36"/>
        <end position="48"/>
    </location>
</feature>
<feature type="strand" evidence="30">
    <location>
        <begin position="53"/>
        <end position="57"/>
    </location>
</feature>
<feature type="helix" evidence="30">
    <location>
        <begin position="64"/>
        <end position="69"/>
    </location>
</feature>
<feature type="strand" evidence="30">
    <location>
        <begin position="77"/>
        <end position="80"/>
    </location>
</feature>
<feature type="strand" evidence="30">
    <location>
        <begin position="83"/>
        <end position="85"/>
    </location>
</feature>
<feature type="helix" evidence="30">
    <location>
        <begin position="88"/>
        <end position="98"/>
    </location>
</feature>
<feature type="turn" evidence="30">
    <location>
        <begin position="101"/>
        <end position="103"/>
    </location>
</feature>
<feature type="helix" evidence="30">
    <location>
        <begin position="112"/>
        <end position="115"/>
    </location>
</feature>
<feature type="turn" evidence="30">
    <location>
        <begin position="116"/>
        <end position="120"/>
    </location>
</feature>
<feature type="helix" evidence="30">
    <location>
        <begin position="121"/>
        <end position="130"/>
    </location>
</feature>
<feature type="helix" evidence="30">
    <location>
        <begin position="134"/>
        <end position="136"/>
    </location>
</feature>
<feature type="helix" evidence="30">
    <location>
        <begin position="137"/>
        <end position="156"/>
    </location>
</feature>
<feature type="strand" evidence="30">
    <location>
        <begin position="181"/>
        <end position="183"/>
    </location>
</feature>
<feature type="helix" evidence="30">
    <location>
        <begin position="186"/>
        <end position="206"/>
    </location>
</feature>
<feature type="helix" evidence="30">
    <location>
        <begin position="215"/>
        <end position="225"/>
    </location>
</feature>
<feature type="helix" evidence="30">
    <location>
        <begin position="228"/>
        <end position="231"/>
    </location>
</feature>
<feature type="helix" evidence="30">
    <location>
        <begin position="237"/>
        <end position="243"/>
    </location>
</feature>
<feature type="turn" evidence="30">
    <location>
        <begin position="244"/>
        <end position="247"/>
    </location>
</feature>
<organism>
    <name type="scientific">Homo sapiens</name>
    <name type="common">Human</name>
    <dbReference type="NCBI Taxonomy" id="9606"/>
    <lineage>
        <taxon>Eukaryota</taxon>
        <taxon>Metazoa</taxon>
        <taxon>Chordata</taxon>
        <taxon>Craniata</taxon>
        <taxon>Vertebrata</taxon>
        <taxon>Euteleostomi</taxon>
        <taxon>Mammalia</taxon>
        <taxon>Eutheria</taxon>
        <taxon>Euarchontoglires</taxon>
        <taxon>Primates</taxon>
        <taxon>Haplorrhini</taxon>
        <taxon>Catarrhini</taxon>
        <taxon>Hominidae</taxon>
        <taxon>Homo</taxon>
    </lineage>
</organism>
<accession>Q9Y696</accession>
<accession>Q9UFW9</accession>
<accession>Q9UQJ6</accession>
<comment type="function">
    <text evidence="3 7 9 10 11 15 16 17 18">In the soluble state, catalyzes glutaredoxin-like thiol disulfide exchange reactions with reduced glutathione as electron donor (PubMed:25581026, PubMed:37759794). Can insert into membranes and form voltage-dependent multi-ion conductive channels. Membrane insertion seems to be redox-regulated and may occur only under oxidizing conditions (By similarity) (PubMed:16176272). Has alternate cellular functions like a potential role in angiogenesis or in maintaining apical-basolateral membrane polarity during mitosis and cytokinesis. Could also promote endothelial cell proliferation and regulate endothelial morphogenesis (tubulogenesis). Promotes cell-surface expression of HRH3.</text>
</comment>
<comment type="catalytic activity">
    <reaction evidence="10">
        <text>chloride(in) = chloride(out)</text>
        <dbReference type="Rhea" id="RHEA:29823"/>
        <dbReference type="ChEBI" id="CHEBI:17996"/>
    </reaction>
</comment>
<comment type="catalytic activity">
    <reaction evidence="3">
        <text>thiocyanate(in) = thiocyanate(out)</text>
        <dbReference type="Rhea" id="RHEA:75347"/>
        <dbReference type="ChEBI" id="CHEBI:18022"/>
    </reaction>
</comment>
<comment type="catalytic activity">
    <reaction evidence="3">
        <text>nitrate(in) = nitrate(out)</text>
        <dbReference type="Rhea" id="RHEA:34923"/>
        <dbReference type="ChEBI" id="CHEBI:17632"/>
    </reaction>
</comment>
<comment type="catalytic activity">
    <reaction evidence="3">
        <text>iodide(out) = iodide(in)</text>
        <dbReference type="Rhea" id="RHEA:66324"/>
        <dbReference type="ChEBI" id="CHEBI:16382"/>
    </reaction>
</comment>
<comment type="catalytic activity">
    <reaction evidence="3">
        <text>bromide(in) = bromide(out)</text>
        <dbReference type="Rhea" id="RHEA:75383"/>
        <dbReference type="ChEBI" id="CHEBI:15858"/>
    </reaction>
</comment>
<comment type="catalytic activity">
    <reaction evidence="3">
        <text>fluoride(in) = fluoride(out)</text>
        <dbReference type="Rhea" id="RHEA:76159"/>
        <dbReference type="ChEBI" id="CHEBI:17051"/>
    </reaction>
</comment>
<comment type="catalytic activity">
    <reaction evidence="3">
        <text>choline(out) = choline(in)</text>
        <dbReference type="Rhea" id="RHEA:32751"/>
        <dbReference type="ChEBI" id="CHEBI:15354"/>
    </reaction>
</comment>
<comment type="activity regulation">
    <text evidence="18">Inhibited by rapamycin, amphotericin B and IAA-94.</text>
</comment>
<comment type="biophysicochemical properties">
    <kinetics>
        <KM evidence="18">0.345 mM for 2-hydroxyethyl disulfide (HEDS)</KM>
        <Vmax evidence="18">5.396 umol/min/mg enzyme toward 2-hydroxyethyl disulfide (HEDS)</Vmax>
    </kinetics>
    <phDependence>
        <text evidence="18">Optimally active at neutral to slightly alkaline pH.</text>
    </phDependence>
</comment>
<comment type="subunit">
    <text evidence="6 8 10 15">Component of a multimeric complex consisting of several cytoskeletal proteins, including actin, ezrin, alpha-actinin, gelsolin, IQGAP1 and CLIC5A. Binds directly to brain dynamin I in a complex containing actin, tubulin and 14-3-3 isoforms. Monomer. Interacts with HRH3. Interacts with AKAP9.</text>
</comment>
<comment type="interaction">
    <interactant intactId="EBI-1057480">
        <id>Q9Y696</id>
    </interactant>
    <interactant intactId="EBI-11978969">
        <id>Q4KMQ1-2</id>
        <label>TPRN</label>
    </interactant>
    <organismsDiffer>false</organismsDiffer>
    <experiments>4</experiments>
</comment>
<comment type="subcellular location">
    <subcellularLocation>
        <location evidence="9">Cytoplasm</location>
        <location evidence="9">Cytoskeleton</location>
        <location evidence="9">Microtubule organizing center</location>
        <location evidence="9">Centrosome</location>
    </subcellularLocation>
    <subcellularLocation>
        <location evidence="22">Cytoplasmic vesicle membrane</location>
        <topology evidence="21">Single-pass membrane protein</topology>
    </subcellularLocation>
    <subcellularLocation>
        <location evidence="22">Nucleus</location>
    </subcellularLocation>
    <subcellularLocation>
        <location evidence="15">Cell membrane</location>
        <topology evidence="21">Single-pass membrane protein</topology>
    </subcellularLocation>
    <subcellularLocation>
        <location evidence="3">Mitochondrion</location>
    </subcellularLocation>
    <subcellularLocation>
        <location evidence="9">Cell junction</location>
    </subcellularLocation>
    <subcellularLocation>
        <location evidence="3">Endoplasmic reticulum membrane</location>
        <topology evidence="3">Single-pass membrane protein</topology>
    </subcellularLocation>
    <text evidence="3 9">Colocalized with AKAP9 at the centrosome and midbody. Exists both as soluble cytoplasmic protein and as membrane protein with probably a single transmembrane domain. Present in an intracellular vesicular compartment that likely represent trans-Golgi network vesicles. Might not be present in the nucleus of cardiac cells.</text>
</comment>
<comment type="tissue specificity">
    <text evidence="6 13 14">Detected in epithelial cells from colon, esophagus and kidney (at protein level). Expression is prominent in heart, kidney, placenta and skeletal muscle.</text>
</comment>
<comment type="induction">
    <text evidence="7 14">Up-regulated by calcium ions in differentiating keratinocytes. Up-regulated in myofibroblasts.</text>
</comment>
<comment type="domain">
    <text evidence="17 18">The active G-site contains a monothiol Cys-X-X-Ser motif which mediates glutathione-dependent redox catalysis.</text>
</comment>
<comment type="domain">
    <text evidence="12">Members of this family may change from a globular, soluble state to a state where the N-terminal domain is inserted into the membrane and functions as a chloride channel. The redox status of the active cysteine in Cys-X-X-Cys/Ser motif likely determines the capacity to adopt a soluble or membrane-inserted state. A conformation change of the N-terminal domain is thought to expose hydrophobic surfaces that trigger membrane insertion.</text>
</comment>
<comment type="similarity">
    <text evidence="21">Belongs to the chloride channel CLIC family.</text>
</comment>
<comment type="online information" name="Atlas of Genetics and Cytogenetics in Oncology and Haematology">
    <link uri="https://atlasgeneticsoncology.org/gene/40102/CLIC4"/>
</comment>
<gene>
    <name evidence="20 25" type="primary">CLIC4</name>
</gene>
<keyword id="KW-0002">3D-structure</keyword>
<keyword id="KW-0007">Acetylation</keyword>
<keyword id="KW-0965">Cell junction</keyword>
<keyword id="KW-1003">Cell membrane</keyword>
<keyword id="KW-0868">Chloride</keyword>
<keyword id="KW-0869">Chloride channel</keyword>
<keyword id="KW-0963">Cytoplasm</keyword>
<keyword id="KW-0968">Cytoplasmic vesicle</keyword>
<keyword id="KW-0206">Cytoskeleton</keyword>
<keyword id="KW-0903">Direct protein sequencing</keyword>
<keyword id="KW-0256">Endoplasmic reticulum</keyword>
<keyword id="KW-0407">Ion channel</keyword>
<keyword id="KW-0406">Ion transport</keyword>
<keyword id="KW-0472">Membrane</keyword>
<keyword id="KW-0496">Mitochondrion</keyword>
<keyword id="KW-0539">Nucleus</keyword>
<keyword id="KW-0560">Oxidoreductase</keyword>
<keyword id="KW-0597">Phosphoprotein</keyword>
<keyword id="KW-1267">Proteomics identification</keyword>
<keyword id="KW-1185">Reference proteome</keyword>
<keyword id="KW-0812">Transmembrane</keyword>
<keyword id="KW-1133">Transmembrane helix</keyword>
<keyword id="KW-0813">Transport</keyword>
<keyword id="KW-0851">Voltage-gated channel</keyword>
<proteinExistence type="evidence at protein level"/>
<dbReference type="EC" id="1.8.-.-" evidence="17 18"/>
<dbReference type="EMBL" id="AF097330">
    <property type="protein sequence ID" value="AAD38446.1"/>
    <property type="molecule type" value="mRNA"/>
</dbReference>
<dbReference type="EMBL" id="AF109196">
    <property type="protein sequence ID" value="AAD26136.1"/>
    <property type="molecule type" value="mRNA"/>
</dbReference>
<dbReference type="EMBL" id="AL117424">
    <property type="protein sequence ID" value="CAB55916.1"/>
    <property type="molecule type" value="mRNA"/>
</dbReference>
<dbReference type="EMBL" id="BC012444">
    <property type="protein sequence ID" value="AAH12444.1"/>
    <property type="molecule type" value="mRNA"/>
</dbReference>
<dbReference type="CCDS" id="CCDS256.1"/>
<dbReference type="PIR" id="T17226">
    <property type="entry name" value="T17226"/>
</dbReference>
<dbReference type="RefSeq" id="NP_039234.1">
    <property type="nucleotide sequence ID" value="NM_013943.3"/>
</dbReference>
<dbReference type="RefSeq" id="XP_054191840.1">
    <property type="nucleotide sequence ID" value="XM_054335865.1"/>
</dbReference>
<dbReference type="PDB" id="2AHE">
    <property type="method" value="X-ray"/>
    <property type="resolution" value="1.80 A"/>
    <property type="chains" value="A=1-251"/>
</dbReference>
<dbReference type="PDB" id="2D2Z">
    <property type="method" value="X-ray"/>
    <property type="resolution" value="2.20 A"/>
    <property type="chains" value="A/B/C=1-253"/>
</dbReference>
<dbReference type="PDB" id="3OQS">
    <property type="method" value="X-ray"/>
    <property type="resolution" value="2.00 A"/>
    <property type="chains" value="B=198-207"/>
</dbReference>
<dbReference type="PDBsum" id="2AHE"/>
<dbReference type="PDBsum" id="2D2Z"/>
<dbReference type="PDBsum" id="3OQS"/>
<dbReference type="SMR" id="Q9Y696"/>
<dbReference type="BioGRID" id="117431">
    <property type="interactions" value="140"/>
</dbReference>
<dbReference type="FunCoup" id="Q9Y696">
    <property type="interactions" value="1805"/>
</dbReference>
<dbReference type="IntAct" id="Q9Y696">
    <property type="interactions" value="17"/>
</dbReference>
<dbReference type="MINT" id="Q9Y696"/>
<dbReference type="STRING" id="9606.ENSP00000363500"/>
<dbReference type="TCDB" id="1.A.12.1.6">
    <property type="family name" value="the intracellular chloride channel (clic) family"/>
</dbReference>
<dbReference type="GlyGen" id="Q9Y696">
    <property type="glycosylation" value="1 site, 1 O-linked glycan (1 site)"/>
</dbReference>
<dbReference type="iPTMnet" id="Q9Y696"/>
<dbReference type="MetOSite" id="Q9Y696"/>
<dbReference type="PhosphoSitePlus" id="Q9Y696"/>
<dbReference type="SwissPalm" id="Q9Y696"/>
<dbReference type="BioMuta" id="CLIC4"/>
<dbReference type="DMDM" id="20141285"/>
<dbReference type="OGP" id="Q9Y696"/>
<dbReference type="REPRODUCTION-2DPAGE" id="IPI00001960"/>
<dbReference type="jPOST" id="Q9Y696"/>
<dbReference type="MassIVE" id="Q9Y696"/>
<dbReference type="PaxDb" id="9606-ENSP00000363500"/>
<dbReference type="PeptideAtlas" id="Q9Y696"/>
<dbReference type="ProteomicsDB" id="86632"/>
<dbReference type="Pumba" id="Q9Y696"/>
<dbReference type="TopDownProteomics" id="Q9Y696"/>
<dbReference type="Antibodypedia" id="1956">
    <property type="antibodies" value="358 antibodies from 40 providers"/>
</dbReference>
<dbReference type="DNASU" id="25932"/>
<dbReference type="Ensembl" id="ENST00000374379.9">
    <property type="protein sequence ID" value="ENSP00000363500.4"/>
    <property type="gene ID" value="ENSG00000169504.15"/>
</dbReference>
<dbReference type="Ensembl" id="ENST00000488683.1">
    <property type="protein sequence ID" value="ENSP00000436538.1"/>
    <property type="gene ID" value="ENSG00000169504.15"/>
</dbReference>
<dbReference type="GeneID" id="25932"/>
<dbReference type="KEGG" id="hsa:25932"/>
<dbReference type="MANE-Select" id="ENST00000374379.9">
    <property type="protein sequence ID" value="ENSP00000363500.4"/>
    <property type="RefSeq nucleotide sequence ID" value="NM_013943.3"/>
    <property type="RefSeq protein sequence ID" value="NP_039234.1"/>
</dbReference>
<dbReference type="UCSC" id="uc001bjo.3">
    <property type="organism name" value="human"/>
</dbReference>
<dbReference type="AGR" id="HGNC:13518"/>
<dbReference type="CTD" id="25932"/>
<dbReference type="DisGeNET" id="25932"/>
<dbReference type="GeneCards" id="CLIC4"/>
<dbReference type="HGNC" id="HGNC:13518">
    <property type="gene designation" value="CLIC4"/>
</dbReference>
<dbReference type="HPA" id="ENSG00000169504">
    <property type="expression patterns" value="Low tissue specificity"/>
</dbReference>
<dbReference type="MIM" id="606536">
    <property type="type" value="gene"/>
</dbReference>
<dbReference type="neXtProt" id="NX_Q9Y696"/>
<dbReference type="OpenTargets" id="ENSG00000169504"/>
<dbReference type="PharmGKB" id="PA26591"/>
<dbReference type="VEuPathDB" id="HostDB:ENSG00000169504"/>
<dbReference type="eggNOG" id="KOG1422">
    <property type="taxonomic scope" value="Eukaryota"/>
</dbReference>
<dbReference type="GeneTree" id="ENSGT00940000155017"/>
<dbReference type="HOGENOM" id="CLU_061051_1_0_1"/>
<dbReference type="InParanoid" id="Q9Y696"/>
<dbReference type="OMA" id="LCPPKYA"/>
<dbReference type="OrthoDB" id="1935530at2759"/>
<dbReference type="PAN-GO" id="Q9Y696">
    <property type="GO annotations" value="4 GO annotations based on evolutionary models"/>
</dbReference>
<dbReference type="PhylomeDB" id="Q9Y696"/>
<dbReference type="TreeFam" id="TF315438"/>
<dbReference type="PathwayCommons" id="Q9Y696"/>
<dbReference type="SignaLink" id="Q9Y696"/>
<dbReference type="BioGRID-ORCS" id="25932">
    <property type="hits" value="16 hits in 1129 CRISPR screens"/>
</dbReference>
<dbReference type="CD-CODE" id="8C2F96ED">
    <property type="entry name" value="Centrosome"/>
</dbReference>
<dbReference type="CD-CODE" id="91857CE7">
    <property type="entry name" value="Nucleolus"/>
</dbReference>
<dbReference type="CD-CODE" id="DEE660B4">
    <property type="entry name" value="Stress granule"/>
</dbReference>
<dbReference type="ChiTaRS" id="CLIC4">
    <property type="organism name" value="human"/>
</dbReference>
<dbReference type="EvolutionaryTrace" id="Q9Y696"/>
<dbReference type="GeneWiki" id="CLIC4"/>
<dbReference type="GenomeRNAi" id="25932"/>
<dbReference type="Pharos" id="Q9Y696">
    <property type="development level" value="Tbio"/>
</dbReference>
<dbReference type="PRO" id="PR:Q9Y696"/>
<dbReference type="Proteomes" id="UP000005640">
    <property type="component" value="Chromosome 1"/>
</dbReference>
<dbReference type="RNAct" id="Q9Y696">
    <property type="molecule type" value="protein"/>
</dbReference>
<dbReference type="Bgee" id="ENSG00000169504">
    <property type="expression patterns" value="Expressed in blood vessel layer and 214 other cell types or tissues"/>
</dbReference>
<dbReference type="ExpressionAtlas" id="Q9Y696">
    <property type="expression patterns" value="baseline and differential"/>
</dbReference>
<dbReference type="GO" id="GO:0015629">
    <property type="term" value="C:actin cytoskeleton"/>
    <property type="evidence" value="ECO:0000304"/>
    <property type="project" value="UniProtKB"/>
</dbReference>
<dbReference type="GO" id="GO:0045177">
    <property type="term" value="C:apical part of cell"/>
    <property type="evidence" value="ECO:0000314"/>
    <property type="project" value="UniProtKB"/>
</dbReference>
<dbReference type="GO" id="GO:0009986">
    <property type="term" value="C:cell surface"/>
    <property type="evidence" value="ECO:0000314"/>
    <property type="project" value="UniProtKB"/>
</dbReference>
<dbReference type="GO" id="GO:0005911">
    <property type="term" value="C:cell-cell junction"/>
    <property type="evidence" value="ECO:0000314"/>
    <property type="project" value="UniProtKB"/>
</dbReference>
<dbReference type="GO" id="GO:0005813">
    <property type="term" value="C:centrosome"/>
    <property type="evidence" value="ECO:0000314"/>
    <property type="project" value="UniProtKB"/>
</dbReference>
<dbReference type="GO" id="GO:0034707">
    <property type="term" value="C:chloride channel complex"/>
    <property type="evidence" value="ECO:0007669"/>
    <property type="project" value="UniProtKB-KW"/>
</dbReference>
<dbReference type="GO" id="GO:0005737">
    <property type="term" value="C:cytoplasm"/>
    <property type="evidence" value="ECO:0000314"/>
    <property type="project" value="UniProtKB"/>
</dbReference>
<dbReference type="GO" id="GO:0030659">
    <property type="term" value="C:cytoplasmic vesicle membrane"/>
    <property type="evidence" value="ECO:0007669"/>
    <property type="project" value="UniProtKB-SubCell"/>
</dbReference>
<dbReference type="GO" id="GO:0005829">
    <property type="term" value="C:cytosol"/>
    <property type="evidence" value="ECO:0000314"/>
    <property type="project" value="UniProtKB"/>
</dbReference>
<dbReference type="GO" id="GO:0005789">
    <property type="term" value="C:endoplasmic reticulum membrane"/>
    <property type="evidence" value="ECO:0007669"/>
    <property type="project" value="UniProtKB-SubCell"/>
</dbReference>
<dbReference type="GO" id="GO:0070062">
    <property type="term" value="C:extracellular exosome"/>
    <property type="evidence" value="ECO:0007005"/>
    <property type="project" value="UniProtKB"/>
</dbReference>
<dbReference type="GO" id="GO:0016020">
    <property type="term" value="C:membrane"/>
    <property type="evidence" value="ECO:0000318"/>
    <property type="project" value="GO_Central"/>
</dbReference>
<dbReference type="GO" id="GO:0005902">
    <property type="term" value="C:microvillus"/>
    <property type="evidence" value="ECO:0000314"/>
    <property type="project" value="UniProtKB"/>
</dbReference>
<dbReference type="GO" id="GO:0030496">
    <property type="term" value="C:midbody"/>
    <property type="evidence" value="ECO:0000314"/>
    <property type="project" value="UniProtKB"/>
</dbReference>
<dbReference type="GO" id="GO:0005739">
    <property type="term" value="C:mitochondrion"/>
    <property type="evidence" value="ECO:0000314"/>
    <property type="project" value="UniProtKB"/>
</dbReference>
<dbReference type="GO" id="GO:0016363">
    <property type="term" value="C:nuclear matrix"/>
    <property type="evidence" value="ECO:0000314"/>
    <property type="project" value="UniProtKB"/>
</dbReference>
<dbReference type="GO" id="GO:0048471">
    <property type="term" value="C:perinuclear region of cytoplasm"/>
    <property type="evidence" value="ECO:0000314"/>
    <property type="project" value="UniProtKB"/>
</dbReference>
<dbReference type="GO" id="GO:0005886">
    <property type="term" value="C:plasma membrane"/>
    <property type="evidence" value="ECO:0000314"/>
    <property type="project" value="UniProtKB"/>
</dbReference>
<dbReference type="GO" id="GO:0005254">
    <property type="term" value="F:chloride channel activity"/>
    <property type="evidence" value="ECO:0000318"/>
    <property type="project" value="GO_Central"/>
</dbReference>
<dbReference type="GO" id="GO:0016491">
    <property type="term" value="F:oxidoreductase activity"/>
    <property type="evidence" value="ECO:0007669"/>
    <property type="project" value="UniProtKB-KW"/>
</dbReference>
<dbReference type="GO" id="GO:0001525">
    <property type="term" value="P:angiogenesis"/>
    <property type="evidence" value="ECO:0007669"/>
    <property type="project" value="Ensembl"/>
</dbReference>
<dbReference type="GO" id="GO:0048754">
    <property type="term" value="P:branching morphogenesis of an epithelial tube"/>
    <property type="evidence" value="ECO:0007669"/>
    <property type="project" value="Ensembl"/>
</dbReference>
<dbReference type="GO" id="GO:0030154">
    <property type="term" value="P:cell differentiation"/>
    <property type="evidence" value="ECO:0000304"/>
    <property type="project" value="UniProtKB"/>
</dbReference>
<dbReference type="GO" id="GO:0071277">
    <property type="term" value="P:cellular response to calcium ion"/>
    <property type="evidence" value="ECO:0000315"/>
    <property type="project" value="UniProtKB"/>
</dbReference>
<dbReference type="GO" id="GO:0006821">
    <property type="term" value="P:chloride transport"/>
    <property type="evidence" value="ECO:0000318"/>
    <property type="project" value="GO_Central"/>
</dbReference>
<dbReference type="GO" id="GO:0001886">
    <property type="term" value="P:endothelial cell morphogenesis"/>
    <property type="evidence" value="ECO:0007669"/>
    <property type="project" value="Ensembl"/>
</dbReference>
<dbReference type="GO" id="GO:0035088">
    <property type="term" value="P:establishment or maintenance of apical/basal cell polarity"/>
    <property type="evidence" value="ECO:0000303"/>
    <property type="project" value="UniProtKB"/>
</dbReference>
<dbReference type="GO" id="GO:0009566">
    <property type="term" value="P:fertilization"/>
    <property type="evidence" value="ECO:0007669"/>
    <property type="project" value="Ensembl"/>
</dbReference>
<dbReference type="GO" id="GO:0030216">
    <property type="term" value="P:keratinocyte differentiation"/>
    <property type="evidence" value="ECO:0000315"/>
    <property type="project" value="UniProtKB"/>
</dbReference>
<dbReference type="GO" id="GO:0035264">
    <property type="term" value="P:multicellular organism growth"/>
    <property type="evidence" value="ECO:0007669"/>
    <property type="project" value="Ensembl"/>
</dbReference>
<dbReference type="GO" id="GO:0030336">
    <property type="term" value="P:negative regulation of cell migration"/>
    <property type="evidence" value="ECO:0000314"/>
    <property type="project" value="UniProtKB"/>
</dbReference>
<dbReference type="GO" id="GO:0051493">
    <property type="term" value="P:regulation of cytoskeleton organization"/>
    <property type="evidence" value="ECO:0000303"/>
    <property type="project" value="UniProtKB"/>
</dbReference>
<dbReference type="GO" id="GO:0061299">
    <property type="term" value="P:retina vasculature morphogenesis in camera-type eye"/>
    <property type="evidence" value="ECO:0007669"/>
    <property type="project" value="Ensembl"/>
</dbReference>
<dbReference type="GO" id="GO:0007035">
    <property type="term" value="P:vacuolar acidification"/>
    <property type="evidence" value="ECO:0007669"/>
    <property type="project" value="Ensembl"/>
</dbReference>
<dbReference type="CDD" id="cd10296">
    <property type="entry name" value="GST_C_CLIC4"/>
    <property type="match status" value="1"/>
</dbReference>
<dbReference type="CDD" id="cd03061">
    <property type="entry name" value="GST_N_CLIC"/>
    <property type="match status" value="1"/>
</dbReference>
<dbReference type="FunFam" id="1.20.1050.10:FF:000001">
    <property type="entry name" value="Chloride intracellular channel 2"/>
    <property type="match status" value="1"/>
</dbReference>
<dbReference type="FunFam" id="3.40.30.10:FF:000021">
    <property type="entry name" value="Chloride intracellular channel 4"/>
    <property type="match status" value="1"/>
</dbReference>
<dbReference type="Gene3D" id="1.20.1050.10">
    <property type="match status" value="1"/>
</dbReference>
<dbReference type="Gene3D" id="3.40.30.10">
    <property type="entry name" value="Glutaredoxin"/>
    <property type="match status" value="1"/>
</dbReference>
<dbReference type="InterPro" id="IPR002946">
    <property type="entry name" value="CLIC"/>
</dbReference>
<dbReference type="InterPro" id="IPR053823">
    <property type="entry name" value="CLIC_N"/>
</dbReference>
<dbReference type="InterPro" id="IPR010987">
    <property type="entry name" value="Glutathione-S-Trfase_C-like"/>
</dbReference>
<dbReference type="InterPro" id="IPR036282">
    <property type="entry name" value="Glutathione-S-Trfase_C_sf"/>
</dbReference>
<dbReference type="InterPro" id="IPR040079">
    <property type="entry name" value="Glutathione_S-Trfase"/>
</dbReference>
<dbReference type="InterPro" id="IPR036249">
    <property type="entry name" value="Thioredoxin-like_sf"/>
</dbReference>
<dbReference type="NCBIfam" id="TIGR00862">
    <property type="entry name" value="O-ClC"/>
    <property type="match status" value="1"/>
</dbReference>
<dbReference type="PANTHER" id="PTHR45476:SF5">
    <property type="entry name" value="CHLORIDE INTRACELLULAR CHANNEL 4-RELATED"/>
    <property type="match status" value="1"/>
</dbReference>
<dbReference type="PANTHER" id="PTHR45476">
    <property type="entry name" value="CHLORIDE INTRACELLULAR CHANNEL PROTEIN 6-RELATED"/>
    <property type="match status" value="1"/>
</dbReference>
<dbReference type="Pfam" id="PF22441">
    <property type="entry name" value="CLIC-like_N"/>
    <property type="match status" value="1"/>
</dbReference>
<dbReference type="PRINTS" id="PR01263">
    <property type="entry name" value="INTCLCHANNEL"/>
</dbReference>
<dbReference type="SFLD" id="SFLDS00019">
    <property type="entry name" value="Glutathione_Transferase_(cytos"/>
    <property type="match status" value="1"/>
</dbReference>
<dbReference type="SFLD" id="SFLDG00358">
    <property type="entry name" value="Main_(cytGST)"/>
    <property type="match status" value="1"/>
</dbReference>
<dbReference type="SUPFAM" id="SSF47616">
    <property type="entry name" value="GST C-terminal domain-like"/>
    <property type="match status" value="1"/>
</dbReference>
<dbReference type="SUPFAM" id="SSF52833">
    <property type="entry name" value="Thioredoxin-like"/>
    <property type="match status" value="1"/>
</dbReference>
<dbReference type="PROSITE" id="PS50405">
    <property type="entry name" value="GST_CTER"/>
    <property type="match status" value="1"/>
</dbReference>